<dbReference type="EMBL" id="AE016958">
    <property type="protein sequence ID" value="AAS03856.1"/>
    <property type="molecule type" value="Genomic_DNA"/>
</dbReference>
<dbReference type="RefSeq" id="WP_003876506.1">
    <property type="nucleotide sequence ID" value="NZ_CP106873.1"/>
</dbReference>
<dbReference type="SMR" id="Q73ZR2"/>
<dbReference type="STRING" id="262316.MAP_1539"/>
<dbReference type="GeneID" id="75270264"/>
<dbReference type="KEGG" id="mpa:MAP_1539"/>
<dbReference type="eggNOG" id="COG0509">
    <property type="taxonomic scope" value="Bacteria"/>
</dbReference>
<dbReference type="HOGENOM" id="CLU_097408_2_0_11"/>
<dbReference type="Proteomes" id="UP000000580">
    <property type="component" value="Chromosome"/>
</dbReference>
<dbReference type="GO" id="GO:0005829">
    <property type="term" value="C:cytosol"/>
    <property type="evidence" value="ECO:0007669"/>
    <property type="project" value="TreeGrafter"/>
</dbReference>
<dbReference type="GO" id="GO:0005960">
    <property type="term" value="C:glycine cleavage complex"/>
    <property type="evidence" value="ECO:0007669"/>
    <property type="project" value="InterPro"/>
</dbReference>
<dbReference type="GO" id="GO:0019464">
    <property type="term" value="P:glycine decarboxylation via glycine cleavage system"/>
    <property type="evidence" value="ECO:0007669"/>
    <property type="project" value="UniProtKB-UniRule"/>
</dbReference>
<dbReference type="CDD" id="cd06848">
    <property type="entry name" value="GCS_H"/>
    <property type="match status" value="1"/>
</dbReference>
<dbReference type="Gene3D" id="2.40.50.100">
    <property type="match status" value="1"/>
</dbReference>
<dbReference type="HAMAP" id="MF_00272">
    <property type="entry name" value="GcvH"/>
    <property type="match status" value="1"/>
</dbReference>
<dbReference type="InterPro" id="IPR003016">
    <property type="entry name" value="2-oxoA_DH_lipoyl-BS"/>
</dbReference>
<dbReference type="InterPro" id="IPR000089">
    <property type="entry name" value="Biotin_lipoyl"/>
</dbReference>
<dbReference type="InterPro" id="IPR002930">
    <property type="entry name" value="GCV_H"/>
</dbReference>
<dbReference type="InterPro" id="IPR033753">
    <property type="entry name" value="GCV_H/Fam206"/>
</dbReference>
<dbReference type="InterPro" id="IPR017453">
    <property type="entry name" value="GCV_H_sub"/>
</dbReference>
<dbReference type="InterPro" id="IPR011053">
    <property type="entry name" value="Single_hybrid_motif"/>
</dbReference>
<dbReference type="NCBIfam" id="TIGR00527">
    <property type="entry name" value="gcvH"/>
    <property type="match status" value="1"/>
</dbReference>
<dbReference type="NCBIfam" id="NF002270">
    <property type="entry name" value="PRK01202.1"/>
    <property type="match status" value="1"/>
</dbReference>
<dbReference type="PANTHER" id="PTHR11715">
    <property type="entry name" value="GLYCINE CLEAVAGE SYSTEM H PROTEIN"/>
    <property type="match status" value="1"/>
</dbReference>
<dbReference type="PANTHER" id="PTHR11715:SF3">
    <property type="entry name" value="GLYCINE CLEAVAGE SYSTEM H PROTEIN-RELATED"/>
    <property type="match status" value="1"/>
</dbReference>
<dbReference type="Pfam" id="PF01597">
    <property type="entry name" value="GCV_H"/>
    <property type="match status" value="1"/>
</dbReference>
<dbReference type="SUPFAM" id="SSF51230">
    <property type="entry name" value="Single hybrid motif"/>
    <property type="match status" value="1"/>
</dbReference>
<dbReference type="PROSITE" id="PS50968">
    <property type="entry name" value="BIOTINYL_LIPOYL"/>
    <property type="match status" value="1"/>
</dbReference>
<dbReference type="PROSITE" id="PS00189">
    <property type="entry name" value="LIPOYL"/>
    <property type="match status" value="1"/>
</dbReference>
<name>GCSH_MYCPA</name>
<sequence length="132" mass="13915">MSDIPPDLHYTAEHEWVRRSGDDTVRVGITDFAQSALGDVVFVQLPEVGAQLTAGESFGEVESTKSVSDLYAPVSGTVTAVNTDLEGSPQLVNSDPYGAGWLLDVQVSDAAALESAITALLDAEAYRGTLTE</sequence>
<gene>
    <name evidence="1" type="primary">gcvH</name>
    <name type="ordered locus">MAP_1539</name>
</gene>
<proteinExistence type="inferred from homology"/>
<protein>
    <recommendedName>
        <fullName evidence="1">Glycine cleavage system H protein</fullName>
    </recommendedName>
</protein>
<accession>Q73ZR2</accession>
<evidence type="ECO:0000255" key="1">
    <source>
        <dbReference type="HAMAP-Rule" id="MF_00272"/>
    </source>
</evidence>
<evidence type="ECO:0000255" key="2">
    <source>
        <dbReference type="PROSITE-ProRule" id="PRU01066"/>
    </source>
</evidence>
<keyword id="KW-0450">Lipoyl</keyword>
<keyword id="KW-1185">Reference proteome</keyword>
<organism>
    <name type="scientific">Mycolicibacterium paratuberculosis (strain ATCC BAA-968 / K-10)</name>
    <name type="common">Mycobacterium paratuberculosis</name>
    <dbReference type="NCBI Taxonomy" id="262316"/>
    <lineage>
        <taxon>Bacteria</taxon>
        <taxon>Bacillati</taxon>
        <taxon>Actinomycetota</taxon>
        <taxon>Actinomycetes</taxon>
        <taxon>Mycobacteriales</taxon>
        <taxon>Mycobacteriaceae</taxon>
        <taxon>Mycobacterium</taxon>
        <taxon>Mycobacterium avium complex (MAC)</taxon>
    </lineage>
</organism>
<reference key="1">
    <citation type="journal article" date="2005" name="Proc. Natl. Acad. Sci. U.S.A.">
        <title>The complete genome sequence of Mycobacterium avium subspecies paratuberculosis.</title>
        <authorList>
            <person name="Li L."/>
            <person name="Bannantine J.P."/>
            <person name="Zhang Q."/>
            <person name="Amonsin A."/>
            <person name="May B.J."/>
            <person name="Alt D."/>
            <person name="Banerji N."/>
            <person name="Kanjilal S."/>
            <person name="Kapur V."/>
        </authorList>
    </citation>
    <scope>NUCLEOTIDE SEQUENCE [LARGE SCALE GENOMIC DNA]</scope>
    <source>
        <strain>ATCC BAA-968 / K-10</strain>
    </source>
</reference>
<feature type="chain" id="PRO_0000302392" description="Glycine cleavage system H protein">
    <location>
        <begin position="1"/>
        <end position="132"/>
    </location>
</feature>
<feature type="domain" description="Lipoyl-binding" evidence="2">
    <location>
        <begin position="24"/>
        <end position="106"/>
    </location>
</feature>
<feature type="modified residue" description="N6-lipoyllysine" evidence="1">
    <location>
        <position position="65"/>
    </location>
</feature>
<comment type="function">
    <text evidence="1">The glycine cleavage system catalyzes the degradation of glycine. The H protein shuttles the methylamine group of glycine from the P protein to the T protein.</text>
</comment>
<comment type="cofactor">
    <cofactor evidence="1">
        <name>(R)-lipoate</name>
        <dbReference type="ChEBI" id="CHEBI:83088"/>
    </cofactor>
    <text evidence="1">Binds 1 lipoyl cofactor covalently.</text>
</comment>
<comment type="subunit">
    <text evidence="1">The glycine cleavage system is composed of four proteins: P, T, L and H.</text>
</comment>
<comment type="similarity">
    <text evidence="1">Belongs to the GcvH family.</text>
</comment>